<gene>
    <name evidence="4" type="primary">rec14</name>
    <name evidence="5" type="ORF">SPBC32F12.02</name>
</gene>
<name>REC14_SCHPO</name>
<evidence type="ECO:0000255" key="1"/>
<evidence type="ECO:0000269" key="2">
    <source>
    </source>
</evidence>
<evidence type="ECO:0000269" key="3">
    <source>
    </source>
</evidence>
<evidence type="ECO:0000303" key="4">
    <source>
    </source>
</evidence>
<evidence type="ECO:0000312" key="5">
    <source>
        <dbReference type="PomBase" id="SPBC32F12.02"/>
    </source>
</evidence>
<dbReference type="EMBL" id="U39144">
    <property type="protein sequence ID" value="AAB71433.1"/>
    <property type="molecule type" value="Genomic_DNA"/>
</dbReference>
<dbReference type="EMBL" id="CU329671">
    <property type="protein sequence ID" value="CAA19363.1"/>
    <property type="molecule type" value="Genomic_DNA"/>
</dbReference>
<dbReference type="PIR" id="T40226">
    <property type="entry name" value="T40226"/>
</dbReference>
<dbReference type="RefSeq" id="NP_596145.1">
    <property type="nucleotide sequence ID" value="NM_001022064.2"/>
</dbReference>
<dbReference type="SMR" id="Q09150"/>
<dbReference type="BioGRID" id="276754">
    <property type="interactions" value="80"/>
</dbReference>
<dbReference type="FunCoup" id="Q09150">
    <property type="interactions" value="297"/>
</dbReference>
<dbReference type="STRING" id="284812.Q09150"/>
<dbReference type="PaxDb" id="4896-SPBC32F12.02.1"/>
<dbReference type="EnsemblFungi" id="SPBC32F12.02.1">
    <property type="protein sequence ID" value="SPBC32F12.02.1:pep"/>
    <property type="gene ID" value="SPBC32F12.02"/>
</dbReference>
<dbReference type="GeneID" id="2540221"/>
<dbReference type="KEGG" id="spo:2540221"/>
<dbReference type="PomBase" id="SPBC32F12.02">
    <property type="gene designation" value="rec14"/>
</dbReference>
<dbReference type="VEuPathDB" id="FungiDB:SPBC32F12.02"/>
<dbReference type="eggNOG" id="KOG4155">
    <property type="taxonomic scope" value="Eukaryota"/>
</dbReference>
<dbReference type="HOGENOM" id="CLU_000288_57_11_1"/>
<dbReference type="InParanoid" id="Q09150"/>
<dbReference type="OMA" id="LDSSMCL"/>
<dbReference type="PhylomeDB" id="Q09150"/>
<dbReference type="Reactome" id="R-SPO-429958">
    <property type="pathway name" value="mRNA decay by 3' to 5' exoribonuclease"/>
</dbReference>
<dbReference type="PRO" id="PR:Q09150"/>
<dbReference type="Proteomes" id="UP000002485">
    <property type="component" value="Chromosome II"/>
</dbReference>
<dbReference type="GO" id="GO:0005829">
    <property type="term" value="C:cytosol"/>
    <property type="evidence" value="ECO:0007005"/>
    <property type="project" value="PomBase"/>
</dbReference>
<dbReference type="GO" id="GO:0005634">
    <property type="term" value="C:nucleus"/>
    <property type="evidence" value="ECO:0007005"/>
    <property type="project" value="PomBase"/>
</dbReference>
<dbReference type="GO" id="GO:0055087">
    <property type="term" value="C:Ski complex"/>
    <property type="evidence" value="ECO:0000266"/>
    <property type="project" value="PomBase"/>
</dbReference>
<dbReference type="GO" id="GO:0051321">
    <property type="term" value="P:meiotic cell cycle"/>
    <property type="evidence" value="ECO:0007669"/>
    <property type="project" value="UniProtKB-KW"/>
</dbReference>
<dbReference type="GO" id="GO:0070478">
    <property type="term" value="P:nuclear-transcribed mRNA catabolic process, 3'-5' exonucleolytic nonsense-mediated decay"/>
    <property type="evidence" value="ECO:0000266"/>
    <property type="project" value="PomBase"/>
</dbReference>
<dbReference type="GO" id="GO:0070481">
    <property type="term" value="P:nuclear-transcribed mRNA catabolic process, non-stop decay"/>
    <property type="evidence" value="ECO:0000266"/>
    <property type="project" value="PomBase"/>
</dbReference>
<dbReference type="CDD" id="cd00200">
    <property type="entry name" value="WD40"/>
    <property type="match status" value="1"/>
</dbReference>
<dbReference type="Gene3D" id="2.130.10.10">
    <property type="entry name" value="YVTN repeat-like/Quinoprotein amine dehydrogenase"/>
    <property type="match status" value="1"/>
</dbReference>
<dbReference type="InterPro" id="IPR051510">
    <property type="entry name" value="SKI8"/>
</dbReference>
<dbReference type="InterPro" id="IPR015943">
    <property type="entry name" value="WD40/YVTN_repeat-like_dom_sf"/>
</dbReference>
<dbReference type="InterPro" id="IPR036322">
    <property type="entry name" value="WD40_repeat_dom_sf"/>
</dbReference>
<dbReference type="InterPro" id="IPR001680">
    <property type="entry name" value="WD40_rpt"/>
</dbReference>
<dbReference type="PANTHER" id="PTHR44090:SF1">
    <property type="entry name" value="SUPERKILLER COMPLEX PROTEIN 8"/>
    <property type="match status" value="1"/>
</dbReference>
<dbReference type="PANTHER" id="PTHR44090">
    <property type="entry name" value="WD REPEAT-CONTAINING PROTEIN 61"/>
    <property type="match status" value="1"/>
</dbReference>
<dbReference type="Pfam" id="PF00400">
    <property type="entry name" value="WD40"/>
    <property type="match status" value="4"/>
</dbReference>
<dbReference type="SMART" id="SM00320">
    <property type="entry name" value="WD40"/>
    <property type="match status" value="7"/>
</dbReference>
<dbReference type="SUPFAM" id="SSF50978">
    <property type="entry name" value="WD40 repeat-like"/>
    <property type="match status" value="1"/>
</dbReference>
<dbReference type="PROSITE" id="PS50082">
    <property type="entry name" value="WD_REPEATS_2"/>
    <property type="match status" value="3"/>
</dbReference>
<dbReference type="PROSITE" id="PS50294">
    <property type="entry name" value="WD_REPEATS_REGION"/>
    <property type="match status" value="1"/>
</dbReference>
<proteinExistence type="evidence at protein level"/>
<feature type="chain" id="PRO_0000051198" description="Meiotic recombination protein rec14">
    <location>
        <begin position="1"/>
        <end position="302"/>
    </location>
</feature>
<feature type="repeat" description="WD 1" evidence="1">
    <location>
        <begin position="14"/>
        <end position="51"/>
    </location>
</feature>
<feature type="repeat" description="WD 2" evidence="1">
    <location>
        <begin position="57"/>
        <end position="96"/>
    </location>
</feature>
<feature type="repeat" description="WD 3" evidence="1">
    <location>
        <begin position="101"/>
        <end position="140"/>
    </location>
</feature>
<feature type="repeat" description="WD 4" evidence="1">
    <location>
        <begin position="142"/>
        <end position="184"/>
    </location>
</feature>
<feature type="repeat" description="WD 5" evidence="1">
    <location>
        <begin position="185"/>
        <end position="226"/>
    </location>
</feature>
<feature type="repeat" description="WD 6" evidence="1">
    <location>
        <begin position="227"/>
        <end position="266"/>
    </location>
</feature>
<feature type="repeat" description="WD 7" evidence="1">
    <location>
        <begin position="269"/>
        <end position="302"/>
    </location>
</feature>
<comment type="function">
    <text evidence="2">Required for formation of the rec12-mediated double-strand breaks (DSBs) that initiate meiotic recombination.</text>
</comment>
<comment type="subunit">
    <text evidence="3">Component of the DSB catalytic core (DSBC) complex, composed of at least rec12, rec6 and rec14. The complex interacts with mde2.</text>
</comment>
<organism>
    <name type="scientific">Schizosaccharomyces pombe (strain 972 / ATCC 24843)</name>
    <name type="common">Fission yeast</name>
    <dbReference type="NCBI Taxonomy" id="284812"/>
    <lineage>
        <taxon>Eukaryota</taxon>
        <taxon>Fungi</taxon>
        <taxon>Dikarya</taxon>
        <taxon>Ascomycota</taxon>
        <taxon>Taphrinomycotina</taxon>
        <taxon>Schizosaccharomycetes</taxon>
        <taxon>Schizosaccharomycetales</taxon>
        <taxon>Schizosaccharomycetaceae</taxon>
        <taxon>Schizosaccharomyces</taxon>
    </lineage>
</organism>
<accession>Q09150</accession>
<sequence length="302" mass="32936">MRKEYLVSHIEENAHQADIYSLNVVAGNLWSASGDSKIKKWSIGDAEHSLVEEIDTPHKLGVHHLATSLDENVVVSCGFGQDVYVWNPETNEFRDLGNNAQHPSECWSSCISPDGQTIAFTSVDGRIAVWDNPSDCKISELDTKGKFGLCIDYSPNGRFIVSGHQTGQLFLISTETGRLFHVLSGHTSPVRSVAFSPGSTLLAAAGDSKMITIYDVLSGDQVGQLRGHAAWIFAVAFNPVGDLLLSADVEGKIKIWDIDTMECISTQSETDGAIWAVAWYKNGFIVAGADKSIRWYRAAATE</sequence>
<reference key="1">
    <citation type="journal article" date="1997" name="Genetics">
        <title>A WD repeat protein, Rec14, essential for meiotic recombination in Schizosaccharomyces pombe.</title>
        <authorList>
            <person name="Evans D.H."/>
            <person name="Li Y.F."/>
            <person name="Fox M.E."/>
            <person name="Smith G.R."/>
        </authorList>
    </citation>
    <scope>NUCLEOTIDE SEQUENCE [GENOMIC DNA]</scope>
</reference>
<reference key="2">
    <citation type="journal article" date="2002" name="Nature">
        <title>The genome sequence of Schizosaccharomyces pombe.</title>
        <authorList>
            <person name="Wood V."/>
            <person name="Gwilliam R."/>
            <person name="Rajandream M.A."/>
            <person name="Lyne M.H."/>
            <person name="Lyne R."/>
            <person name="Stewart A."/>
            <person name="Sgouros J.G."/>
            <person name="Peat N."/>
            <person name="Hayles J."/>
            <person name="Baker S.G."/>
            <person name="Basham D."/>
            <person name="Bowman S."/>
            <person name="Brooks K."/>
            <person name="Brown D."/>
            <person name="Brown S."/>
            <person name="Chillingworth T."/>
            <person name="Churcher C.M."/>
            <person name="Collins M."/>
            <person name="Connor R."/>
            <person name="Cronin A."/>
            <person name="Davis P."/>
            <person name="Feltwell T."/>
            <person name="Fraser A."/>
            <person name="Gentles S."/>
            <person name="Goble A."/>
            <person name="Hamlin N."/>
            <person name="Harris D.E."/>
            <person name="Hidalgo J."/>
            <person name="Hodgson G."/>
            <person name="Holroyd S."/>
            <person name="Hornsby T."/>
            <person name="Howarth S."/>
            <person name="Huckle E.J."/>
            <person name="Hunt S."/>
            <person name="Jagels K."/>
            <person name="James K.D."/>
            <person name="Jones L."/>
            <person name="Jones M."/>
            <person name="Leather S."/>
            <person name="McDonald S."/>
            <person name="McLean J."/>
            <person name="Mooney P."/>
            <person name="Moule S."/>
            <person name="Mungall K.L."/>
            <person name="Murphy L.D."/>
            <person name="Niblett D."/>
            <person name="Odell C."/>
            <person name="Oliver K."/>
            <person name="O'Neil S."/>
            <person name="Pearson D."/>
            <person name="Quail M.A."/>
            <person name="Rabbinowitsch E."/>
            <person name="Rutherford K.M."/>
            <person name="Rutter S."/>
            <person name="Saunders D."/>
            <person name="Seeger K."/>
            <person name="Sharp S."/>
            <person name="Skelton J."/>
            <person name="Simmonds M.N."/>
            <person name="Squares R."/>
            <person name="Squares S."/>
            <person name="Stevens K."/>
            <person name="Taylor K."/>
            <person name="Taylor R.G."/>
            <person name="Tivey A."/>
            <person name="Walsh S.V."/>
            <person name="Warren T."/>
            <person name="Whitehead S."/>
            <person name="Woodward J.R."/>
            <person name="Volckaert G."/>
            <person name="Aert R."/>
            <person name="Robben J."/>
            <person name="Grymonprez B."/>
            <person name="Weltjens I."/>
            <person name="Vanstreels E."/>
            <person name="Rieger M."/>
            <person name="Schaefer M."/>
            <person name="Mueller-Auer S."/>
            <person name="Gabel C."/>
            <person name="Fuchs M."/>
            <person name="Duesterhoeft A."/>
            <person name="Fritzc C."/>
            <person name="Holzer E."/>
            <person name="Moestl D."/>
            <person name="Hilbert H."/>
            <person name="Borzym K."/>
            <person name="Langer I."/>
            <person name="Beck A."/>
            <person name="Lehrach H."/>
            <person name="Reinhardt R."/>
            <person name="Pohl T.M."/>
            <person name="Eger P."/>
            <person name="Zimmermann W."/>
            <person name="Wedler H."/>
            <person name="Wambutt R."/>
            <person name="Purnelle B."/>
            <person name="Goffeau A."/>
            <person name="Cadieu E."/>
            <person name="Dreano S."/>
            <person name="Gloux S."/>
            <person name="Lelaure V."/>
            <person name="Mottier S."/>
            <person name="Galibert F."/>
            <person name="Aves S.J."/>
            <person name="Xiang Z."/>
            <person name="Hunt C."/>
            <person name="Moore K."/>
            <person name="Hurst S.M."/>
            <person name="Lucas M."/>
            <person name="Rochet M."/>
            <person name="Gaillardin C."/>
            <person name="Tallada V.A."/>
            <person name="Garzon A."/>
            <person name="Thode G."/>
            <person name="Daga R.R."/>
            <person name="Cruzado L."/>
            <person name="Jimenez J."/>
            <person name="Sanchez M."/>
            <person name="del Rey F."/>
            <person name="Benito J."/>
            <person name="Dominguez A."/>
            <person name="Revuelta J.L."/>
            <person name="Moreno S."/>
            <person name="Armstrong J."/>
            <person name="Forsburg S.L."/>
            <person name="Cerutti L."/>
            <person name="Lowe T."/>
            <person name="McCombie W.R."/>
            <person name="Paulsen I."/>
            <person name="Potashkin J."/>
            <person name="Shpakovski G.V."/>
            <person name="Ussery D."/>
            <person name="Barrell B.G."/>
            <person name="Nurse P."/>
        </authorList>
    </citation>
    <scope>NUCLEOTIDE SEQUENCE [LARGE SCALE GENOMIC DNA]</scope>
    <source>
        <strain>972 / ATCC 24843</strain>
    </source>
</reference>
<reference key="3">
    <citation type="journal article" date="2000" name="Mol. Cell">
        <title>Meiotic DNA breaks associated with recombination in S. pombe.</title>
        <authorList>
            <person name="Cervantes M.D."/>
            <person name="Farah J.A."/>
            <person name="Smith G.R."/>
        </authorList>
    </citation>
    <scope>FUNCTION</scope>
</reference>
<reference key="4">
    <citation type="journal article" date="2012" name="Mol. Cell">
        <title>A central coupler for recombination initiation linking chromosome architecture to S phase checkpoint.</title>
        <authorList>
            <person name="Miyoshi T."/>
            <person name="Ito M."/>
            <person name="Kugou K."/>
            <person name="Yamada S."/>
            <person name="Furuichi M."/>
            <person name="Oda A."/>
            <person name="Yamada T."/>
            <person name="Hirota K."/>
            <person name="Masai H."/>
            <person name="Ohta K."/>
        </authorList>
    </citation>
    <scope>IDENTIFICATION IN DSBC COMPLEX</scope>
    <scope>INTERACTION WITH MDE2</scope>
</reference>
<keyword id="KW-0469">Meiosis</keyword>
<keyword id="KW-1185">Reference proteome</keyword>
<keyword id="KW-0677">Repeat</keyword>
<keyword id="KW-0853">WD repeat</keyword>
<protein>
    <recommendedName>
        <fullName>Meiotic recombination protein rec14</fullName>
    </recommendedName>
</protein>